<keyword id="KW-0325">Glycoprotein</keyword>
<keyword id="KW-0494">Milk protein</keyword>
<keyword id="KW-0597">Phosphoprotein</keyword>
<keyword id="KW-0964">Secreted</keyword>
<proteinExistence type="evidence at transcript level"/>
<feature type="chain" id="PRO_0000144110" description="Kappa-casein">
    <location>
        <begin position="1" status="less than"/>
        <end position="153"/>
    </location>
</feature>
<feature type="site" description="Cleavage; by chymosin/rennin" evidence="1">
    <location>
        <begin position="89"/>
        <end position="90"/>
    </location>
</feature>
<feature type="modified residue" description="Phosphoserine; alternate" evidence="2">
    <location>
        <position position="133"/>
    </location>
</feature>
<feature type="modified residue" description="Phosphoserine" evidence="3">
    <location>
        <position position="150"/>
    </location>
</feature>
<feature type="glycosylation site" description="O-linked (GalNAc...) threonine" evidence="2">
    <location>
        <position position="105"/>
    </location>
</feature>
<feature type="glycosylation site" description="O-linked (GalNAc...) threonine" evidence="2">
    <location>
        <position position="115"/>
    </location>
</feature>
<feature type="glycosylation site" description="O-linked (GalNAc...) threonine" evidence="2">
    <location>
        <position position="117"/>
    </location>
</feature>
<feature type="glycosylation site" description="O-linked (GalNAc...) threonine" evidence="2">
    <location>
        <position position="120"/>
    </location>
</feature>
<feature type="glycosylation site" description="O-linked (GalNAc...) threonine" evidence="2">
    <location>
        <position position="126"/>
    </location>
</feature>
<feature type="glycosylation site" description="O-linked (GalNAc...) serine; alternate" evidence="2">
    <location>
        <position position="133"/>
    </location>
</feature>
<feature type="glycosylation site" description="O-linked (GalNAc...) threonine" evidence="2">
    <location>
        <position position="149"/>
    </location>
</feature>
<feature type="non-terminal residue">
    <location>
        <position position="1"/>
    </location>
</feature>
<gene>
    <name type="primary">CSN3</name>
    <name type="synonym">CSN10</name>
    <name type="synonym">CSNK</name>
</gene>
<sequence>FFNDKIVKYIPIQYVLSRYPSYGINYYQHRPVALTNSQFLPYPYYAKPVAVRSPAQILQWQVLPNTVPAKSCQAQPTTMARRPHPRLSFMAIPPKKNQDKTDSPTINTIATVEPTITPITEAIVNTVAAREASSEFIASAPETNTVQVTSTVV</sequence>
<organism>
    <name type="scientific">Giraffa camelopardalis</name>
    <name type="common">Giraffe</name>
    <dbReference type="NCBI Taxonomy" id="9894"/>
    <lineage>
        <taxon>Eukaryota</taxon>
        <taxon>Metazoa</taxon>
        <taxon>Chordata</taxon>
        <taxon>Craniata</taxon>
        <taxon>Vertebrata</taxon>
        <taxon>Euteleostomi</taxon>
        <taxon>Mammalia</taxon>
        <taxon>Eutheria</taxon>
        <taxon>Laurasiatheria</taxon>
        <taxon>Artiodactyla</taxon>
        <taxon>Ruminantia</taxon>
        <taxon>Pecora</taxon>
        <taxon>Giraffidae</taxon>
        <taxon>Giraffa</taxon>
    </lineage>
</organism>
<dbReference type="EMBL" id="U53886">
    <property type="protein sequence ID" value="AAB08411.1"/>
    <property type="molecule type" value="Genomic_DNA"/>
</dbReference>
<dbReference type="EMBL" id="U37516">
    <property type="protein sequence ID" value="AAC48656.1"/>
    <property type="molecule type" value="Genomic_DNA"/>
</dbReference>
<dbReference type="GlyCosmos" id="Q28417">
    <property type="glycosylation" value="7 sites, No reported glycans"/>
</dbReference>
<dbReference type="GO" id="GO:0005615">
    <property type="term" value="C:extracellular space"/>
    <property type="evidence" value="ECO:0007669"/>
    <property type="project" value="TreeGrafter"/>
</dbReference>
<dbReference type="GO" id="GO:0007595">
    <property type="term" value="P:lactation"/>
    <property type="evidence" value="ECO:0007669"/>
    <property type="project" value="TreeGrafter"/>
</dbReference>
<dbReference type="GO" id="GO:0050821">
    <property type="term" value="P:protein stabilization"/>
    <property type="evidence" value="ECO:0007669"/>
    <property type="project" value="TreeGrafter"/>
</dbReference>
<dbReference type="InterPro" id="IPR000117">
    <property type="entry name" value="Casein_kappa"/>
</dbReference>
<dbReference type="PANTHER" id="PTHR11470">
    <property type="entry name" value="KAPPA CASEIN"/>
    <property type="match status" value="1"/>
</dbReference>
<dbReference type="PANTHER" id="PTHR11470:SF2">
    <property type="entry name" value="KAPPA-CASEIN"/>
    <property type="match status" value="1"/>
</dbReference>
<dbReference type="Pfam" id="PF00997">
    <property type="entry name" value="Casein_kappa"/>
    <property type="match status" value="1"/>
</dbReference>
<protein>
    <recommendedName>
        <fullName>Kappa-casein</fullName>
    </recommendedName>
</protein>
<comment type="function">
    <text>Kappa-casein stabilizes micelle formation, preventing casein precipitation in milk.</text>
</comment>
<comment type="subcellular location">
    <subcellularLocation>
        <location>Secreted</location>
    </subcellularLocation>
</comment>
<comment type="tissue specificity">
    <text>Mammary gland specific. Secreted in milk.</text>
</comment>
<comment type="similarity">
    <text evidence="4">Belongs to the kappa-casein family.</text>
</comment>
<evidence type="ECO:0000250" key="1"/>
<evidence type="ECO:0000250" key="2">
    <source>
        <dbReference type="UniProtKB" id="P02668"/>
    </source>
</evidence>
<evidence type="ECO:0000250" key="3">
    <source>
        <dbReference type="UniProtKB" id="P02670"/>
    </source>
</evidence>
<evidence type="ECO:0000305" key="4"/>
<reference key="1">
    <citation type="journal article" date="1996" name="Mol. Biol. Evol.">
        <title>Evidence from milk casein genes that cetaceans are close relatives of hippopotamid artiodactyls.</title>
        <authorList>
            <person name="Gatesy J."/>
            <person name="Hayashi C."/>
            <person name="Cronin M.A."/>
            <person name="Arctander P."/>
        </authorList>
    </citation>
    <scope>NUCLEOTIDE SEQUENCE [GENOMIC DNA]</scope>
</reference>
<reference key="2">
    <citation type="journal article" date="1996" name="Mol. Phylogenet. Evol.">
        <title>K-casein gene phylogeny of higher ruminants (Pecora, Artiodactyla).</title>
        <authorList>
            <person name="Cronin M.A."/>
            <person name="Stuart R."/>
            <person name="Pierson B.J."/>
            <person name="Patton J.C."/>
        </authorList>
    </citation>
    <scope>NUCLEOTIDE SEQUENCE [GENOMIC DNA] OF 32-153</scope>
</reference>
<name>CASK_GIRCA</name>
<accession>Q28417</accession>
<accession>Q95186</accession>